<protein>
    <recommendedName>
        <fullName evidence="1">Peptide methionine sulfoxide reductase MsrA</fullName>
        <shortName evidence="1">Protein-methionine-S-oxide reductase</shortName>
        <ecNumber evidence="1">1.8.4.11</ecNumber>
    </recommendedName>
    <alternativeName>
        <fullName evidence="1">Peptide-methionine (S)-S-oxide reductase</fullName>
        <shortName evidence="1">Peptide Met(O) reductase</shortName>
    </alternativeName>
</protein>
<organism>
    <name type="scientific">Xanthomonas euvesicatoria pv. vesicatoria (strain 85-10)</name>
    <name type="common">Xanthomonas campestris pv. vesicatoria</name>
    <dbReference type="NCBI Taxonomy" id="316273"/>
    <lineage>
        <taxon>Bacteria</taxon>
        <taxon>Pseudomonadati</taxon>
        <taxon>Pseudomonadota</taxon>
        <taxon>Gammaproteobacteria</taxon>
        <taxon>Lysobacterales</taxon>
        <taxon>Lysobacteraceae</taxon>
        <taxon>Xanthomonas</taxon>
    </lineage>
</organism>
<reference key="1">
    <citation type="journal article" date="2005" name="J. Bacteriol.">
        <title>Insights into genome plasticity and pathogenicity of the plant pathogenic Bacterium Xanthomonas campestris pv. vesicatoria revealed by the complete genome sequence.</title>
        <authorList>
            <person name="Thieme F."/>
            <person name="Koebnik R."/>
            <person name="Bekel T."/>
            <person name="Berger C."/>
            <person name="Boch J."/>
            <person name="Buettner D."/>
            <person name="Caldana C."/>
            <person name="Gaigalat L."/>
            <person name="Goesmann A."/>
            <person name="Kay S."/>
            <person name="Kirchner O."/>
            <person name="Lanz C."/>
            <person name="Linke B."/>
            <person name="McHardy A.C."/>
            <person name="Meyer F."/>
            <person name="Mittenhuber G."/>
            <person name="Nies D.H."/>
            <person name="Niesbach-Kloesgen U."/>
            <person name="Patschkowski T."/>
            <person name="Rueckert C."/>
            <person name="Rupp O."/>
            <person name="Schneiker S."/>
            <person name="Schuster S.C."/>
            <person name="Vorhoelter F.J."/>
            <person name="Weber E."/>
            <person name="Puehler A."/>
            <person name="Bonas U."/>
            <person name="Bartels D."/>
            <person name="Kaiser O."/>
        </authorList>
    </citation>
    <scope>NUCLEOTIDE SEQUENCE [LARGE SCALE GENOMIC DNA]</scope>
    <source>
        <strain>85-10</strain>
    </source>
</reference>
<proteinExistence type="inferred from homology"/>
<keyword id="KW-0560">Oxidoreductase</keyword>
<dbReference type="EC" id="1.8.4.11" evidence="1"/>
<dbReference type="EMBL" id="AM039952">
    <property type="protein sequence ID" value="CAJ22568.1"/>
    <property type="molecule type" value="Genomic_DNA"/>
</dbReference>
<dbReference type="RefSeq" id="WP_011346502.1">
    <property type="nucleotide sequence ID" value="NZ_CP017190.1"/>
</dbReference>
<dbReference type="SMR" id="Q3BX45"/>
<dbReference type="STRING" id="456327.BJD11_18090"/>
<dbReference type="GeneID" id="97509268"/>
<dbReference type="KEGG" id="xcv:XCV0937"/>
<dbReference type="eggNOG" id="COG0225">
    <property type="taxonomic scope" value="Bacteria"/>
</dbReference>
<dbReference type="HOGENOM" id="CLU_031040_10_3_6"/>
<dbReference type="Proteomes" id="UP000007069">
    <property type="component" value="Chromosome"/>
</dbReference>
<dbReference type="GO" id="GO:0005737">
    <property type="term" value="C:cytoplasm"/>
    <property type="evidence" value="ECO:0007669"/>
    <property type="project" value="TreeGrafter"/>
</dbReference>
<dbReference type="GO" id="GO:0036456">
    <property type="term" value="F:L-methionine-(S)-S-oxide reductase activity"/>
    <property type="evidence" value="ECO:0007669"/>
    <property type="project" value="TreeGrafter"/>
</dbReference>
<dbReference type="GO" id="GO:0008113">
    <property type="term" value="F:peptide-methionine (S)-S-oxide reductase activity"/>
    <property type="evidence" value="ECO:0007669"/>
    <property type="project" value="UniProtKB-UniRule"/>
</dbReference>
<dbReference type="GO" id="GO:0034599">
    <property type="term" value="P:cellular response to oxidative stress"/>
    <property type="evidence" value="ECO:0007669"/>
    <property type="project" value="TreeGrafter"/>
</dbReference>
<dbReference type="GO" id="GO:0036211">
    <property type="term" value="P:protein modification process"/>
    <property type="evidence" value="ECO:0007669"/>
    <property type="project" value="UniProtKB-UniRule"/>
</dbReference>
<dbReference type="FunFam" id="3.30.1060.10:FF:000001">
    <property type="entry name" value="Peptide methionine sulfoxide reductase MsrA"/>
    <property type="match status" value="1"/>
</dbReference>
<dbReference type="Gene3D" id="3.30.1060.10">
    <property type="entry name" value="Peptide methionine sulphoxide reductase MsrA"/>
    <property type="match status" value="1"/>
</dbReference>
<dbReference type="HAMAP" id="MF_01401">
    <property type="entry name" value="MsrA"/>
    <property type="match status" value="1"/>
</dbReference>
<dbReference type="InterPro" id="IPR002569">
    <property type="entry name" value="Met_Sox_Rdtase_MsrA_dom"/>
</dbReference>
<dbReference type="InterPro" id="IPR036509">
    <property type="entry name" value="Met_Sox_Rdtase_MsrA_sf"/>
</dbReference>
<dbReference type="InterPro" id="IPR050162">
    <property type="entry name" value="MsrA_MetSO_reductase"/>
</dbReference>
<dbReference type="NCBIfam" id="TIGR00401">
    <property type="entry name" value="msrA"/>
    <property type="match status" value="1"/>
</dbReference>
<dbReference type="PANTHER" id="PTHR42799">
    <property type="entry name" value="MITOCHONDRIAL PEPTIDE METHIONINE SULFOXIDE REDUCTASE"/>
    <property type="match status" value="1"/>
</dbReference>
<dbReference type="PANTHER" id="PTHR42799:SF2">
    <property type="entry name" value="MITOCHONDRIAL PEPTIDE METHIONINE SULFOXIDE REDUCTASE"/>
    <property type="match status" value="1"/>
</dbReference>
<dbReference type="Pfam" id="PF01625">
    <property type="entry name" value="PMSR"/>
    <property type="match status" value="1"/>
</dbReference>
<dbReference type="SUPFAM" id="SSF55068">
    <property type="entry name" value="Peptide methionine sulfoxide reductase"/>
    <property type="match status" value="1"/>
</dbReference>
<gene>
    <name evidence="1" type="primary">msrA</name>
    <name type="ordered locus">XCV0937</name>
</gene>
<sequence>MLGIGAFKQRMPRPGEALPGREQALPLHNTHLVNGHPLRGEFIGLAQVQFGLGCFWGAERKFWNVPGVYTTAVGYAGGQTPNATYSEVCSGQTGHTEAVLVVFDEQAVSFAQLLRTFWESHDPTQGMQQGNDVGTQYRSAIYCTTQAQYDAALASRDAYQQQLTAAGYGAITTEIRFPAPTFYYAEDDHQQYLAKHPNGYCGLGGTGVSCPIGLDA</sequence>
<evidence type="ECO:0000255" key="1">
    <source>
        <dbReference type="HAMAP-Rule" id="MF_01401"/>
    </source>
</evidence>
<comment type="function">
    <text evidence="1">Has an important function as a repair enzyme for proteins that have been inactivated by oxidation. Catalyzes the reversible oxidation-reduction of methionine sulfoxide in proteins to methionine.</text>
</comment>
<comment type="catalytic activity">
    <reaction evidence="1">
        <text>L-methionyl-[protein] + [thioredoxin]-disulfide + H2O = L-methionyl-(S)-S-oxide-[protein] + [thioredoxin]-dithiol</text>
        <dbReference type="Rhea" id="RHEA:14217"/>
        <dbReference type="Rhea" id="RHEA-COMP:10698"/>
        <dbReference type="Rhea" id="RHEA-COMP:10700"/>
        <dbReference type="Rhea" id="RHEA-COMP:12313"/>
        <dbReference type="Rhea" id="RHEA-COMP:12315"/>
        <dbReference type="ChEBI" id="CHEBI:15377"/>
        <dbReference type="ChEBI" id="CHEBI:16044"/>
        <dbReference type="ChEBI" id="CHEBI:29950"/>
        <dbReference type="ChEBI" id="CHEBI:44120"/>
        <dbReference type="ChEBI" id="CHEBI:50058"/>
        <dbReference type="EC" id="1.8.4.11"/>
    </reaction>
</comment>
<comment type="catalytic activity">
    <reaction evidence="1">
        <text>[thioredoxin]-disulfide + L-methionine + H2O = L-methionine (S)-S-oxide + [thioredoxin]-dithiol</text>
        <dbReference type="Rhea" id="RHEA:19993"/>
        <dbReference type="Rhea" id="RHEA-COMP:10698"/>
        <dbReference type="Rhea" id="RHEA-COMP:10700"/>
        <dbReference type="ChEBI" id="CHEBI:15377"/>
        <dbReference type="ChEBI" id="CHEBI:29950"/>
        <dbReference type="ChEBI" id="CHEBI:50058"/>
        <dbReference type="ChEBI" id="CHEBI:57844"/>
        <dbReference type="ChEBI" id="CHEBI:58772"/>
        <dbReference type="EC" id="1.8.4.11"/>
    </reaction>
</comment>
<comment type="similarity">
    <text evidence="1">Belongs to the MsrA Met sulfoxide reductase family.</text>
</comment>
<feature type="chain" id="PRO_1000068370" description="Peptide methionine sulfoxide reductase MsrA">
    <location>
        <begin position="1"/>
        <end position="216"/>
    </location>
</feature>
<feature type="active site" evidence="1">
    <location>
        <position position="54"/>
    </location>
</feature>
<name>MSRA_XANE5</name>
<accession>Q3BX45</accession>